<reference key="1">
    <citation type="journal article" date="2006" name="Plant Physiol.">
        <title>Gain-of-function phenotypes of many CLAVATA3/ESR genes, including four new family members, correlate with tandem variations in the conserved CLAVATA3/ESR domain.</title>
        <authorList>
            <person name="Strabala T.J."/>
            <person name="O'donnell P.J."/>
            <person name="Smit A.-M."/>
            <person name="Ampomah-Dwamena C."/>
            <person name="Martin E.J."/>
            <person name="Netzler N."/>
            <person name="Nieuwenhuizen N.J."/>
            <person name="Quinn B.D."/>
            <person name="Foote H.C.C."/>
            <person name="Hudson K.R."/>
        </authorList>
    </citation>
    <scope>NUCLEOTIDE SEQUENCE [GENOMIC DNA]</scope>
    <scope>TISSUE SPECIFICITY</scope>
    <scope>GENE FAMILY</scope>
    <source>
        <strain>cv. Columbia</strain>
    </source>
</reference>
<reference key="2">
    <citation type="journal article" date="2000" name="Nature">
        <title>Sequence and analysis of chromosome 1 of the plant Arabidopsis thaliana.</title>
        <authorList>
            <person name="Theologis A."/>
            <person name="Ecker J.R."/>
            <person name="Palm C.J."/>
            <person name="Federspiel N.A."/>
            <person name="Kaul S."/>
            <person name="White O."/>
            <person name="Alonso J."/>
            <person name="Altafi H."/>
            <person name="Araujo R."/>
            <person name="Bowman C.L."/>
            <person name="Brooks S.Y."/>
            <person name="Buehler E."/>
            <person name="Chan A."/>
            <person name="Chao Q."/>
            <person name="Chen H."/>
            <person name="Cheuk R.F."/>
            <person name="Chin C.W."/>
            <person name="Chung M.K."/>
            <person name="Conn L."/>
            <person name="Conway A.B."/>
            <person name="Conway A.R."/>
            <person name="Creasy T.H."/>
            <person name="Dewar K."/>
            <person name="Dunn P."/>
            <person name="Etgu P."/>
            <person name="Feldblyum T.V."/>
            <person name="Feng J.-D."/>
            <person name="Fong B."/>
            <person name="Fujii C.Y."/>
            <person name="Gill J.E."/>
            <person name="Goldsmith A.D."/>
            <person name="Haas B."/>
            <person name="Hansen N.F."/>
            <person name="Hughes B."/>
            <person name="Huizar L."/>
            <person name="Hunter J.L."/>
            <person name="Jenkins J."/>
            <person name="Johnson-Hopson C."/>
            <person name="Khan S."/>
            <person name="Khaykin E."/>
            <person name="Kim C.J."/>
            <person name="Koo H.L."/>
            <person name="Kremenetskaia I."/>
            <person name="Kurtz D.B."/>
            <person name="Kwan A."/>
            <person name="Lam B."/>
            <person name="Langin-Hooper S."/>
            <person name="Lee A."/>
            <person name="Lee J.M."/>
            <person name="Lenz C.A."/>
            <person name="Li J.H."/>
            <person name="Li Y.-P."/>
            <person name="Lin X."/>
            <person name="Liu S.X."/>
            <person name="Liu Z.A."/>
            <person name="Luros J.S."/>
            <person name="Maiti R."/>
            <person name="Marziali A."/>
            <person name="Militscher J."/>
            <person name="Miranda M."/>
            <person name="Nguyen M."/>
            <person name="Nierman W.C."/>
            <person name="Osborne B.I."/>
            <person name="Pai G."/>
            <person name="Peterson J."/>
            <person name="Pham P.K."/>
            <person name="Rizzo M."/>
            <person name="Rooney T."/>
            <person name="Rowley D."/>
            <person name="Sakano H."/>
            <person name="Salzberg S.L."/>
            <person name="Schwartz J.R."/>
            <person name="Shinn P."/>
            <person name="Southwick A.M."/>
            <person name="Sun H."/>
            <person name="Tallon L.J."/>
            <person name="Tambunga G."/>
            <person name="Toriumi M.J."/>
            <person name="Town C.D."/>
            <person name="Utterback T."/>
            <person name="Van Aken S."/>
            <person name="Vaysberg M."/>
            <person name="Vysotskaia V.S."/>
            <person name="Walker M."/>
            <person name="Wu D."/>
            <person name="Yu G."/>
            <person name="Fraser C.M."/>
            <person name="Venter J.C."/>
            <person name="Davis R.W."/>
        </authorList>
    </citation>
    <scope>NUCLEOTIDE SEQUENCE [LARGE SCALE GENOMIC DNA]</scope>
    <source>
        <strain>cv. Columbia</strain>
    </source>
</reference>
<reference key="3">
    <citation type="journal article" date="2017" name="Plant J.">
        <title>Araport11: a complete reannotation of the Arabidopsis thaliana reference genome.</title>
        <authorList>
            <person name="Cheng C.Y."/>
            <person name="Krishnakumar V."/>
            <person name="Chan A.P."/>
            <person name="Thibaud-Nissen F."/>
            <person name="Schobel S."/>
            <person name="Town C.D."/>
        </authorList>
    </citation>
    <scope>GENOME REANNOTATION</scope>
    <source>
        <strain>cv. Columbia</strain>
    </source>
</reference>
<reference key="4">
    <citation type="journal article" date="2006" name="Plant Biotechnol. J.">
        <title>Simultaneous high-throughput recombinational cloning of open reading frames in closed and open configurations.</title>
        <authorList>
            <person name="Underwood B.A."/>
            <person name="Vanderhaeghen R."/>
            <person name="Whitford R."/>
            <person name="Town C.D."/>
            <person name="Hilson P."/>
        </authorList>
    </citation>
    <scope>NUCLEOTIDE SEQUENCE [LARGE SCALE GENOMIC DNA]</scope>
    <source>
        <strain>cv. Columbia</strain>
    </source>
</reference>
<reference key="5">
    <citation type="journal article" date="2007" name="BMC Genomics">
        <title>Experimental validation of novel genes predicted in the un-annotated regions of the Arabidopsis genome.</title>
        <authorList>
            <person name="Moskal W.A. Jr."/>
            <person name="Wu H.C."/>
            <person name="Underwood B.A."/>
            <person name="Wang W."/>
            <person name="Town C.D."/>
            <person name="Xiao Y.-L."/>
        </authorList>
    </citation>
    <scope>NUCLEOTIDE SEQUENCE [LARGE SCALE MRNA]</scope>
    <source>
        <strain>cv. Columbia</strain>
    </source>
</reference>
<reference key="6">
    <citation type="journal article" date="2006" name="Science">
        <title>Dodeca-CLE peptides as suppressors of plant stem cell differentiation.</title>
        <authorList>
            <person name="Ito Y."/>
            <person name="Nakanomyo I."/>
            <person name="Motose H."/>
            <person name="Iwamoto K."/>
            <person name="Sawa S."/>
            <person name="Dohmae N."/>
            <person name="Fukuda H."/>
        </authorList>
    </citation>
    <scope>FUNCTION</scope>
</reference>
<reference key="7">
    <citation type="journal article" date="2008" name="Cell. Mol. Life Sci.">
        <title>The CLE family of plant polypeptide signaling molecules.</title>
        <authorList>
            <person name="Jun J.H."/>
            <person name="Fiume E."/>
            <person name="Fletcher J.C."/>
        </authorList>
    </citation>
    <scope>REVIEW</scope>
</reference>
<reference key="8">
    <citation type="journal article" date="2008" name="Curr. Opin. Plant Biol.">
        <title>Diverse and conserved roles of CLE peptides.</title>
        <authorList>
            <person name="Mitchum M.G."/>
            <person name="Wang X."/>
            <person name="Davis E.L."/>
        </authorList>
    </citation>
    <scope>REVIEW</scope>
</reference>
<reference key="9">
    <citation type="journal article" date="2010" name="Protoplasma">
        <title>CLE peptide signaling during plant development.</title>
        <authorList>
            <person name="Wang G."/>
            <person name="Fiers M."/>
        </authorList>
    </citation>
    <scope>REVIEW</scope>
</reference>
<reference key="10">
    <citation type="journal article" date="2013" name="Curr. Biol.">
        <title>A novel pollen-pistil interaction conferring high-temperature tolerance during reproduction via CLE45 signaling.</title>
        <authorList>
            <person name="Endo S."/>
            <person name="Shinohara H."/>
            <person name="Matsubayashi Y."/>
            <person name="Fukuda H."/>
        </authorList>
    </citation>
    <scope>FUNCTION</scope>
    <scope>DISRUPTION PHENOTYPE</scope>
    <scope>INTERACTION WITH SKM1</scope>
    <scope>TISSUE SPECIFICITY</scope>
    <scope>DEVELOPMENTAL STAGE</scope>
    <scope>INDUCTION BY HIGH TEMPERATURE</scope>
</reference>
<reference key="11">
    <citation type="journal article" date="2013" name="Proc. Natl. Acad. Sci. U.S.A.">
        <title>Suppression of Arabidopsis protophloem differentiation and root meristem growth by CLE45 requires the receptor-like kinase BAM3.</title>
        <authorList>
            <person name="Depuydt S."/>
            <person name="Rodriguez-Villalon A."/>
            <person name="Santuari L."/>
            <person name="Wyser-Rmili C."/>
            <person name="Ragni L."/>
            <person name="Hardtke C.S."/>
        </authorList>
    </citation>
    <scope>FUNCTION</scope>
    <scope>DEVELOPMENTAL STAGE</scope>
    <scope>TISSUE SPECIFICITY</scope>
    <source>
        <strain>cv. Columbia</strain>
        <strain>cv. Landsberg erecta</strain>
    </source>
</reference>
<reference key="12">
    <citation type="journal article" date="2014" name="Proc. Natl. Acad. Sci. U.S.A.">
        <title>Molecular genetic framework for protophloem formation.</title>
        <authorList>
            <person name="Rodriguez-Villalon A."/>
            <person name="Gujas B."/>
            <person name="Kang Y.H."/>
            <person name="Breda A.S."/>
            <person name="Cattaneo P."/>
            <person name="Depuydt S."/>
            <person name="Hardtke C.S."/>
        </authorList>
    </citation>
    <scope>FUNCTION</scope>
    <scope>TISSUE SPECIFICITY</scope>
    <source>
        <strain>cv. Columbia</strain>
    </source>
</reference>
<reference key="13">
    <citation type="journal article" date="2016" name="EMBO Rep.">
        <title>Arabidopsis MAKR5 is a positive effector of BAM3-dependent CLE45 signaling.</title>
        <authorList>
            <person name="Kang Y.H."/>
            <person name="Hardtke C.S."/>
        </authorList>
    </citation>
    <scope>FUNCTION</scope>
    <source>
        <strain>cv. Columbia</strain>
    </source>
</reference>
<reference key="14">
    <citation type="journal article" date="2017" name="EMBO Rep.">
        <title>Perception of root-active CLE peptides requires CORYNE function in the phloem vasculature.</title>
        <authorList>
            <person name="Hazak O."/>
            <person name="Brandt B."/>
            <person name="Cattaneo P."/>
            <person name="Santiago J."/>
            <person name="Rodriguez-Villalon A."/>
            <person name="Hothorn M."/>
            <person name="Hardtke C.S."/>
        </authorList>
    </citation>
    <scope>FUNCTION</scope>
    <scope>INTERACTION WITH BAM3</scope>
    <source>
        <strain>cv. Columbia</strain>
    </source>
</reference>
<dbReference type="EMBL" id="AY618658">
    <property type="protein sequence ID" value="AAT36744.1"/>
    <property type="molecule type" value="Genomic_DNA"/>
</dbReference>
<dbReference type="EMBL" id="AC021046">
    <property type="status" value="NOT_ANNOTATED_CDS"/>
    <property type="molecule type" value="Genomic_DNA"/>
</dbReference>
<dbReference type="EMBL" id="CP002684">
    <property type="protein sequence ID" value="AEE34953.1"/>
    <property type="molecule type" value="Genomic_DNA"/>
</dbReference>
<dbReference type="EMBL" id="DQ487459">
    <property type="protein sequence ID" value="ABF59305.1"/>
    <property type="molecule type" value="Genomic_DNA"/>
</dbReference>
<dbReference type="EMBL" id="DQ652620">
    <property type="protein sequence ID" value="ABK27998.1"/>
    <property type="status" value="ALT_SEQ"/>
    <property type="molecule type" value="Genomic_DNA"/>
</dbReference>
<dbReference type="EMBL" id="EF183256">
    <property type="status" value="NOT_ANNOTATED_CDS"/>
    <property type="molecule type" value="mRNA"/>
</dbReference>
<dbReference type="RefSeq" id="NP_001077799.1">
    <property type="nucleotide sequence ID" value="NM_001084330.2"/>
</dbReference>
<dbReference type="SMR" id="Q6IWA9"/>
<dbReference type="BioGRID" id="624052">
    <property type="interactions" value="1"/>
</dbReference>
<dbReference type="FunCoup" id="Q6IWA9">
    <property type="interactions" value="2"/>
</dbReference>
<dbReference type="STRING" id="3702.Q6IWA9"/>
<dbReference type="GlyCosmos" id="Q6IWA9">
    <property type="glycosylation" value="2 sites, No reported glycans"/>
</dbReference>
<dbReference type="GlyGen" id="Q6IWA9">
    <property type="glycosylation" value="2 sites"/>
</dbReference>
<dbReference type="PaxDb" id="3702-AT1G69588.1"/>
<dbReference type="EnsemblPlants" id="AT1G69588.1">
    <property type="protein sequence ID" value="AT1G69588.1"/>
    <property type="gene ID" value="AT1G69588"/>
</dbReference>
<dbReference type="GeneID" id="5007842"/>
<dbReference type="Gramene" id="AT1G69588.1">
    <property type="protein sequence ID" value="AT1G69588.1"/>
    <property type="gene ID" value="AT1G69588"/>
</dbReference>
<dbReference type="KEGG" id="ath:AT1G69588"/>
<dbReference type="Araport" id="AT1G69588"/>
<dbReference type="TAIR" id="AT1G69588">
    <property type="gene designation" value="CLE45"/>
</dbReference>
<dbReference type="eggNOG" id="ENOG502S78B">
    <property type="taxonomic scope" value="Eukaryota"/>
</dbReference>
<dbReference type="HOGENOM" id="CLU_164336_0_0_1"/>
<dbReference type="InParanoid" id="Q6IWA9"/>
<dbReference type="OMA" id="DPIHNRT"/>
<dbReference type="OrthoDB" id="683168at2759"/>
<dbReference type="PhylomeDB" id="Q6IWA9"/>
<dbReference type="PRO" id="PR:Q6IWA9"/>
<dbReference type="Proteomes" id="UP000006548">
    <property type="component" value="Chromosome 1"/>
</dbReference>
<dbReference type="GO" id="GO:0048046">
    <property type="term" value="C:apoplast"/>
    <property type="evidence" value="ECO:0000250"/>
    <property type="project" value="UniProtKB"/>
</dbReference>
<dbReference type="GO" id="GO:0033612">
    <property type="term" value="F:receptor serine/threonine kinase binding"/>
    <property type="evidence" value="ECO:0000250"/>
    <property type="project" value="UniProtKB"/>
</dbReference>
<dbReference type="GO" id="GO:0009734">
    <property type="term" value="P:auxin-activated signaling pathway"/>
    <property type="evidence" value="ECO:0007669"/>
    <property type="project" value="UniProtKB-KW"/>
</dbReference>
<dbReference type="GO" id="GO:0045168">
    <property type="term" value="P:cell-cell signaling involved in cell fate commitment"/>
    <property type="evidence" value="ECO:0000250"/>
    <property type="project" value="UniProtKB"/>
</dbReference>
<dbReference type="GO" id="GO:0010078">
    <property type="term" value="P:maintenance of root meristem identity"/>
    <property type="evidence" value="ECO:0000314"/>
    <property type="project" value="UniProtKB"/>
</dbReference>
<dbReference type="GO" id="GO:0010088">
    <property type="term" value="P:phloem development"/>
    <property type="evidence" value="ECO:0000314"/>
    <property type="project" value="UniProtKB"/>
</dbReference>
<dbReference type="GO" id="GO:0010928">
    <property type="term" value="P:regulation of auxin mediated signaling pathway"/>
    <property type="evidence" value="ECO:0000315"/>
    <property type="project" value="UniProtKB"/>
</dbReference>
<dbReference type="GO" id="GO:0045595">
    <property type="term" value="P:regulation of cell differentiation"/>
    <property type="evidence" value="ECO:0000314"/>
    <property type="project" value="UniProtKB"/>
</dbReference>
<dbReference type="GO" id="GO:0080092">
    <property type="term" value="P:regulation of pollen tube growth"/>
    <property type="evidence" value="ECO:0000314"/>
    <property type="project" value="UniProtKB"/>
</dbReference>
<dbReference type="GO" id="GO:0009266">
    <property type="term" value="P:response to temperature stimulus"/>
    <property type="evidence" value="ECO:0000315"/>
    <property type="project" value="UniProtKB"/>
</dbReference>
<dbReference type="InterPro" id="IPR038821">
    <property type="entry name" value="CLE45-like"/>
</dbReference>
<dbReference type="PANTHER" id="PTHR36726">
    <property type="entry name" value="CLAVATA3/ESR (CLE)-RELATED PROTEIN 45"/>
    <property type="match status" value="1"/>
</dbReference>
<dbReference type="PANTHER" id="PTHR36726:SF4">
    <property type="entry name" value="CLAVATA3_ESR (CLE)-RELATED PROTEIN 45"/>
    <property type="match status" value="1"/>
</dbReference>
<name>CLE45_ARATH</name>
<gene>
    <name evidence="12 13" type="primary">CLE45</name>
    <name evidence="15" type="ordered locus">At1g69588</name>
    <name evidence="16" type="ORF">F24J1</name>
</gene>
<feature type="signal peptide" evidence="2">
    <location>
        <begin position="1"/>
        <end position="20"/>
    </location>
</feature>
<feature type="chain" id="PRO_5000093477" description="CLAVATA3/ESR (CLE)-related protein 45">
    <location>
        <begin position="21"/>
        <end position="124"/>
    </location>
</feature>
<feature type="peptide" id="PRO_0000401289" description="CLE45p" evidence="1">
    <location>
        <begin position="107"/>
        <end position="118"/>
    </location>
</feature>
<feature type="region of interest" description="Disordered" evidence="4">
    <location>
        <begin position="87"/>
        <end position="124"/>
    </location>
</feature>
<feature type="coiled-coil region" evidence="2">
    <location>
        <begin position="71"/>
        <end position="109"/>
    </location>
</feature>
<feature type="compositionally biased region" description="Basic and acidic residues" evidence="4">
    <location>
        <begin position="87"/>
        <end position="103"/>
    </location>
</feature>
<feature type="glycosylation site" description="N-linked (GlcNAc...) asparagine" evidence="3">
    <location>
        <position position="25"/>
    </location>
</feature>
<feature type="glycosylation site" description="N-linked (GlcNAc...) asparagine" evidence="3">
    <location>
        <position position="96"/>
    </location>
</feature>
<accession>Q6IWA9</accession>
<accession>A0MDK4</accession>
<organism>
    <name type="scientific">Arabidopsis thaliana</name>
    <name type="common">Mouse-ear cress</name>
    <dbReference type="NCBI Taxonomy" id="3702"/>
    <lineage>
        <taxon>Eukaryota</taxon>
        <taxon>Viridiplantae</taxon>
        <taxon>Streptophyta</taxon>
        <taxon>Embryophyta</taxon>
        <taxon>Tracheophyta</taxon>
        <taxon>Spermatophyta</taxon>
        <taxon>Magnoliopsida</taxon>
        <taxon>eudicotyledons</taxon>
        <taxon>Gunneridae</taxon>
        <taxon>Pentapetalae</taxon>
        <taxon>rosids</taxon>
        <taxon>malvids</taxon>
        <taxon>Brassicales</taxon>
        <taxon>Brassicaceae</taxon>
        <taxon>Camelineae</taxon>
        <taxon>Arabidopsis</taxon>
    </lineage>
</organism>
<evidence type="ECO:0000250" key="1">
    <source>
        <dbReference type="UniProtKB" id="O49519"/>
    </source>
</evidence>
<evidence type="ECO:0000255" key="2"/>
<evidence type="ECO:0000255" key="3">
    <source>
        <dbReference type="PROSITE-ProRule" id="PRU00498"/>
    </source>
</evidence>
<evidence type="ECO:0000256" key="4">
    <source>
        <dbReference type="SAM" id="MobiDB-lite"/>
    </source>
</evidence>
<evidence type="ECO:0000269" key="5">
    <source>
    </source>
</evidence>
<evidence type="ECO:0000269" key="6">
    <source>
    </source>
</evidence>
<evidence type="ECO:0000269" key="7">
    <source>
    </source>
</evidence>
<evidence type="ECO:0000269" key="8">
    <source>
    </source>
</evidence>
<evidence type="ECO:0000269" key="9">
    <source>
    </source>
</evidence>
<evidence type="ECO:0000269" key="10">
    <source>
    </source>
</evidence>
<evidence type="ECO:0000269" key="11">
    <source>
    </source>
</evidence>
<evidence type="ECO:0000303" key="12">
    <source>
    </source>
</evidence>
<evidence type="ECO:0000303" key="13">
    <source>
    </source>
</evidence>
<evidence type="ECO:0000305" key="14"/>
<evidence type="ECO:0000312" key="15">
    <source>
        <dbReference type="Araport" id="AT1G69588"/>
    </source>
</evidence>
<evidence type="ECO:0000312" key="16">
    <source>
        <dbReference type="EMBL" id="AC021046"/>
    </source>
</evidence>
<sequence length="124" mass="14475">MLGSSTRSMFFLLVCIGLLADNRYNVSAMRHREFFLKETQAEKAGVQTEEISKLRSIGVQFKHTLEDQEMLNKNRRVLEEVNKDKIKAEETQERKNKTEDSFKSSKRRVRRGSDPIHNKAQPFS</sequence>
<comment type="function">
    <molecule>CLE45p</molecule>
    <text evidence="6 7 8 9 10 11">Extracellular signal peptide that regulates cell fate (PubMed:16902140). Represses root apical meristem maintenance (PubMed:16902140, PubMed:23569225). Represses protophloem differentiation in a BAM3-dependent manner (PubMed:23569225). BRX, BAM3, and CLE45 act together to regulate the transition of protophloem cells from proliferation to differentiation, thus impinging on postembryonic growth capacity of the root meristem; this signaling pathway requires CRN and CLV2 and involves MAKR5 for its transduction/amplification (PubMed:23569225, PubMed:27354416, PubMed:28607033). Triggers the accumulation of MAKR5 in developing sieve elements in a BAM3-dependent manner (PubMed:27354416). Prevents, in a dose-dependent manner, auxin response in the root meristem thus leading in the repression of protophloem differentiation and periclinal sieve element precursor cell division (PubMed:25049386). Promotes pollen tube growth prolongation in a SKM1 and SKM2-dependent manner, especially under relatively high temperature (at 30 degrees Celsius), thus conferring tolerance against high temperature probably through the maintenance of mitochondrial activity (PubMed:23910659). Alleviates mitochondrial decay pollen tube in vitro culture (PubMed:23910659).</text>
</comment>
<comment type="subunit">
    <molecule>CLE45p</molecule>
    <text evidence="8 11">Binds to SKM1 present in the pollen grain, particularly under relatively high temperature (at 30 degrees Celsius) (PubMed:23910659). Interacts with BAM3, especially in roots (PubMed:28607033).</text>
</comment>
<comment type="subcellular location">
    <molecule>CLE45p</molecule>
    <subcellularLocation>
        <location evidence="1">Secreted</location>
        <location evidence="1">Extracellular space</location>
    </subcellularLocation>
</comment>
<comment type="tissue specificity">
    <molecule>CLE45p</molecule>
    <text evidence="5 7 8 9">Expressed at low levels in flowers, especially in pistils (PubMed:16489133, PubMed:23910659). Present in vascular tissues (PubMed:23910659). In roots, confined to protophloem and sieve element precursor cells (PubMed:23569225, PubMed:25049386).</text>
</comment>
<comment type="developmental stage">
    <molecule>CLE45p</molecule>
    <text evidence="7 8">In flowers, at 22 degrees Celsius, preferentially expressed in the stigma in the pistil, but expands to the transmitting tract, along which pollen tubes elongated, upon temperature shift to 30 degrees Celsius (PubMed:23910659). Expressed in roots developing protophloem, up to the end of the transition zone (PubMed:23569225).</text>
</comment>
<comment type="induction">
    <molecule>CLE45p</molecule>
    <text evidence="8">A shift from 22 degrees Celsius to 30 degrees Celsius leads to a modified spatial repartition in flowers.</text>
</comment>
<comment type="disruption phenotype">
    <molecule>CLE45p</molecule>
    <text evidence="8">Reduced seed production at 30 degrees Celsius, but not at 22 degrees Celsius.</text>
</comment>
<comment type="similarity">
    <text evidence="14">Belongs to the CLV3/ESR signal peptide family.</text>
</comment>
<comment type="sequence caution" evidence="14">
    <conflict type="erroneous termination">
        <sequence resource="EMBL-CDS" id="ABK27998"/>
    </conflict>
    <text>Extended C-terminus.</text>
</comment>
<protein>
    <recommendedName>
        <fullName evidence="12 13">CLAVATA3/ESR (CLE)-related protein 45</fullName>
    </recommendedName>
    <component>
        <recommendedName>
            <fullName evidence="12 13">CLE45p</fullName>
        </recommendedName>
    </component>
</protein>
<keyword id="KW-0927">Auxin signaling pathway</keyword>
<keyword id="KW-0175">Coiled coil</keyword>
<keyword id="KW-0217">Developmental protein</keyword>
<keyword id="KW-0221">Differentiation</keyword>
<keyword id="KW-0325">Glycoprotein</keyword>
<keyword id="KW-1185">Reference proteome</keyword>
<keyword id="KW-0964">Secreted</keyword>
<keyword id="KW-0732">Signal</keyword>
<proteinExistence type="evidence at protein level"/>